<gene>
    <name evidence="1" type="primary">uppP</name>
    <name type="synonym">bacA</name>
    <name type="ordered locus">SpyM50217</name>
</gene>
<protein>
    <recommendedName>
        <fullName evidence="1">Undecaprenyl-diphosphatase</fullName>
        <ecNumber evidence="1">3.6.1.27</ecNumber>
    </recommendedName>
    <alternativeName>
        <fullName evidence="1">Bacitracin resistance protein</fullName>
    </alternativeName>
    <alternativeName>
        <fullName evidence="1">Undecaprenyl pyrophosphate phosphatase</fullName>
    </alternativeName>
</protein>
<evidence type="ECO:0000255" key="1">
    <source>
        <dbReference type="HAMAP-Rule" id="MF_01006"/>
    </source>
</evidence>
<reference key="1">
    <citation type="journal article" date="2007" name="J. Bacteriol.">
        <title>Complete genome of acute rheumatic fever-associated serotype M5 Streptococcus pyogenes strain Manfredo.</title>
        <authorList>
            <person name="Holden M.T.G."/>
            <person name="Scott A."/>
            <person name="Cherevach I."/>
            <person name="Chillingworth T."/>
            <person name="Churcher C."/>
            <person name="Cronin A."/>
            <person name="Dowd L."/>
            <person name="Feltwell T."/>
            <person name="Hamlin N."/>
            <person name="Holroyd S."/>
            <person name="Jagels K."/>
            <person name="Moule S."/>
            <person name="Mungall K."/>
            <person name="Quail M.A."/>
            <person name="Price C."/>
            <person name="Rabbinowitsch E."/>
            <person name="Sharp S."/>
            <person name="Skelton J."/>
            <person name="Whitehead S."/>
            <person name="Barrell B.G."/>
            <person name="Kehoe M."/>
            <person name="Parkhill J."/>
        </authorList>
    </citation>
    <scope>NUCLEOTIDE SEQUENCE [LARGE SCALE GENOMIC DNA]</scope>
    <source>
        <strain>Manfredo</strain>
    </source>
</reference>
<name>UPPP_STRPG</name>
<proteinExistence type="inferred from homology"/>
<sequence length="279" mass="31566">MLIIELLKAIFFGIIEGITEWLPVSSTGHLILVQEFIRLNQDKAFIEMFNIVIQLGAIIAVMLIYFERLNPFQPGKTAREVQLTWQLWLKVVIACIPSILIAVPLDNWFEAHFYFMVPIAIALIVYGIAFIWIEKRNAQQEPAVTELVRMSYKTAFFIGCFQVLSIVPGTSRSGATILGAIILGTSRTVAADFTFFLAIPTMFGYSGLKAVKFFLDGHHLDFAQVLILLVASLTAFVVSLLAIRFLTDYVKKHDFTIFGKYRIVLGSLLLIYSFFKFVF</sequence>
<accession>A2RCI8</accession>
<comment type="function">
    <text evidence="1">Catalyzes the dephosphorylation of undecaprenyl diphosphate (UPP). Confers resistance to bacitracin.</text>
</comment>
<comment type="catalytic activity">
    <reaction evidence="1">
        <text>di-trans,octa-cis-undecaprenyl diphosphate + H2O = di-trans,octa-cis-undecaprenyl phosphate + phosphate + H(+)</text>
        <dbReference type="Rhea" id="RHEA:28094"/>
        <dbReference type="ChEBI" id="CHEBI:15377"/>
        <dbReference type="ChEBI" id="CHEBI:15378"/>
        <dbReference type="ChEBI" id="CHEBI:43474"/>
        <dbReference type="ChEBI" id="CHEBI:58405"/>
        <dbReference type="ChEBI" id="CHEBI:60392"/>
        <dbReference type="EC" id="3.6.1.27"/>
    </reaction>
</comment>
<comment type="subcellular location">
    <subcellularLocation>
        <location evidence="1">Cell membrane</location>
        <topology evidence="1">Multi-pass membrane protein</topology>
    </subcellularLocation>
</comment>
<comment type="miscellaneous">
    <text>Bacitracin is thought to be involved in the inhibition of peptidoglycan synthesis by sequestering undecaprenyl diphosphate, thereby reducing the pool of lipid carrier available.</text>
</comment>
<comment type="similarity">
    <text evidence="1">Belongs to the UppP family.</text>
</comment>
<dbReference type="EC" id="3.6.1.27" evidence="1"/>
<dbReference type="EMBL" id="AM295007">
    <property type="protein sequence ID" value="CAM29560.1"/>
    <property type="molecule type" value="Genomic_DNA"/>
</dbReference>
<dbReference type="RefSeq" id="WP_011888594.1">
    <property type="nucleotide sequence ID" value="NC_009332.1"/>
</dbReference>
<dbReference type="SMR" id="A2RCI8"/>
<dbReference type="KEGG" id="spf:SpyM50217"/>
<dbReference type="HOGENOM" id="CLU_060296_2_0_9"/>
<dbReference type="GO" id="GO:0005886">
    <property type="term" value="C:plasma membrane"/>
    <property type="evidence" value="ECO:0007669"/>
    <property type="project" value="UniProtKB-SubCell"/>
</dbReference>
<dbReference type="GO" id="GO:0050380">
    <property type="term" value="F:undecaprenyl-diphosphatase activity"/>
    <property type="evidence" value="ECO:0007669"/>
    <property type="project" value="UniProtKB-UniRule"/>
</dbReference>
<dbReference type="GO" id="GO:0071555">
    <property type="term" value="P:cell wall organization"/>
    <property type="evidence" value="ECO:0007669"/>
    <property type="project" value="UniProtKB-KW"/>
</dbReference>
<dbReference type="GO" id="GO:0009252">
    <property type="term" value="P:peptidoglycan biosynthetic process"/>
    <property type="evidence" value="ECO:0007669"/>
    <property type="project" value="UniProtKB-KW"/>
</dbReference>
<dbReference type="GO" id="GO:0008360">
    <property type="term" value="P:regulation of cell shape"/>
    <property type="evidence" value="ECO:0007669"/>
    <property type="project" value="UniProtKB-KW"/>
</dbReference>
<dbReference type="GO" id="GO:0046677">
    <property type="term" value="P:response to antibiotic"/>
    <property type="evidence" value="ECO:0007669"/>
    <property type="project" value="UniProtKB-UniRule"/>
</dbReference>
<dbReference type="HAMAP" id="MF_01006">
    <property type="entry name" value="Undec_diphosphatase"/>
    <property type="match status" value="1"/>
</dbReference>
<dbReference type="InterPro" id="IPR003824">
    <property type="entry name" value="UppP"/>
</dbReference>
<dbReference type="NCBIfam" id="NF001391">
    <property type="entry name" value="PRK00281.1-5"/>
    <property type="match status" value="1"/>
</dbReference>
<dbReference type="PANTHER" id="PTHR30622">
    <property type="entry name" value="UNDECAPRENYL-DIPHOSPHATASE"/>
    <property type="match status" value="1"/>
</dbReference>
<dbReference type="PANTHER" id="PTHR30622:SF3">
    <property type="entry name" value="UNDECAPRENYL-DIPHOSPHATASE"/>
    <property type="match status" value="1"/>
</dbReference>
<dbReference type="Pfam" id="PF02673">
    <property type="entry name" value="BacA"/>
    <property type="match status" value="1"/>
</dbReference>
<feature type="chain" id="PRO_0000290772" description="Undecaprenyl-diphosphatase">
    <location>
        <begin position="1"/>
        <end position="279"/>
    </location>
</feature>
<feature type="transmembrane region" description="Helical" evidence="1">
    <location>
        <begin position="2"/>
        <end position="22"/>
    </location>
</feature>
<feature type="transmembrane region" description="Helical" evidence="1">
    <location>
        <begin position="44"/>
        <end position="64"/>
    </location>
</feature>
<feature type="transmembrane region" description="Helical" evidence="1">
    <location>
        <begin position="85"/>
        <end position="105"/>
    </location>
</feature>
<feature type="transmembrane region" description="Helical" evidence="1">
    <location>
        <begin position="113"/>
        <end position="133"/>
    </location>
</feature>
<feature type="transmembrane region" description="Helical" evidence="1">
    <location>
        <begin position="163"/>
        <end position="183"/>
    </location>
</feature>
<feature type="transmembrane region" description="Helical" evidence="1">
    <location>
        <begin position="188"/>
        <end position="208"/>
    </location>
</feature>
<feature type="transmembrane region" description="Helical" evidence="1">
    <location>
        <begin position="223"/>
        <end position="243"/>
    </location>
</feature>
<feature type="transmembrane region" description="Helical" evidence="1">
    <location>
        <begin position="255"/>
        <end position="275"/>
    </location>
</feature>
<keyword id="KW-0046">Antibiotic resistance</keyword>
<keyword id="KW-1003">Cell membrane</keyword>
<keyword id="KW-0133">Cell shape</keyword>
<keyword id="KW-0961">Cell wall biogenesis/degradation</keyword>
<keyword id="KW-0378">Hydrolase</keyword>
<keyword id="KW-0472">Membrane</keyword>
<keyword id="KW-0573">Peptidoglycan synthesis</keyword>
<keyword id="KW-0812">Transmembrane</keyword>
<keyword id="KW-1133">Transmembrane helix</keyword>
<organism>
    <name type="scientific">Streptococcus pyogenes serotype M5 (strain Manfredo)</name>
    <dbReference type="NCBI Taxonomy" id="160491"/>
    <lineage>
        <taxon>Bacteria</taxon>
        <taxon>Bacillati</taxon>
        <taxon>Bacillota</taxon>
        <taxon>Bacilli</taxon>
        <taxon>Lactobacillales</taxon>
        <taxon>Streptococcaceae</taxon>
        <taxon>Streptococcus</taxon>
    </lineage>
</organism>